<accession>Q38WS5</accession>
<comment type="function">
    <text evidence="1">The UvrABC repair system catalyzes the recognition and processing of DNA lesions. UvrC both incises the 5' and 3' sides of the lesion. The N-terminal half is responsible for the 3' incision and the C-terminal half is responsible for the 5' incision.</text>
</comment>
<comment type="subunit">
    <text evidence="1">Interacts with UvrB in an incision complex.</text>
</comment>
<comment type="subcellular location">
    <subcellularLocation>
        <location evidence="1">Cytoplasm</location>
    </subcellularLocation>
</comment>
<comment type="similarity">
    <text evidence="1">Belongs to the UvrC family.</text>
</comment>
<dbReference type="EMBL" id="CR936503">
    <property type="protein sequence ID" value="CAI55356.1"/>
    <property type="molecule type" value="Genomic_DNA"/>
</dbReference>
<dbReference type="RefSeq" id="WP_011374755.1">
    <property type="nucleotide sequence ID" value="NC_007576.1"/>
</dbReference>
<dbReference type="SMR" id="Q38WS5"/>
<dbReference type="STRING" id="314315.LCA_1055"/>
<dbReference type="KEGG" id="lsa:LCA_1055"/>
<dbReference type="eggNOG" id="COG0322">
    <property type="taxonomic scope" value="Bacteria"/>
</dbReference>
<dbReference type="HOGENOM" id="CLU_014841_3_2_9"/>
<dbReference type="OrthoDB" id="9804933at2"/>
<dbReference type="Proteomes" id="UP000002707">
    <property type="component" value="Chromosome"/>
</dbReference>
<dbReference type="GO" id="GO:0005737">
    <property type="term" value="C:cytoplasm"/>
    <property type="evidence" value="ECO:0007669"/>
    <property type="project" value="UniProtKB-SubCell"/>
</dbReference>
<dbReference type="GO" id="GO:0009380">
    <property type="term" value="C:excinuclease repair complex"/>
    <property type="evidence" value="ECO:0007669"/>
    <property type="project" value="InterPro"/>
</dbReference>
<dbReference type="GO" id="GO:0003677">
    <property type="term" value="F:DNA binding"/>
    <property type="evidence" value="ECO:0007669"/>
    <property type="project" value="UniProtKB-UniRule"/>
</dbReference>
<dbReference type="GO" id="GO:0009381">
    <property type="term" value="F:excinuclease ABC activity"/>
    <property type="evidence" value="ECO:0007669"/>
    <property type="project" value="UniProtKB-UniRule"/>
</dbReference>
<dbReference type="GO" id="GO:0006289">
    <property type="term" value="P:nucleotide-excision repair"/>
    <property type="evidence" value="ECO:0007669"/>
    <property type="project" value="UniProtKB-UniRule"/>
</dbReference>
<dbReference type="GO" id="GO:0009432">
    <property type="term" value="P:SOS response"/>
    <property type="evidence" value="ECO:0007669"/>
    <property type="project" value="UniProtKB-UniRule"/>
</dbReference>
<dbReference type="CDD" id="cd10434">
    <property type="entry name" value="GIY-YIG_UvrC_Cho"/>
    <property type="match status" value="1"/>
</dbReference>
<dbReference type="FunFam" id="3.40.1440.10:FF:000001">
    <property type="entry name" value="UvrABC system protein C"/>
    <property type="match status" value="1"/>
</dbReference>
<dbReference type="Gene3D" id="1.10.150.20">
    <property type="entry name" value="5' to 3' exonuclease, C-terminal subdomain"/>
    <property type="match status" value="1"/>
</dbReference>
<dbReference type="Gene3D" id="3.40.1440.10">
    <property type="entry name" value="GIY-YIG endonuclease"/>
    <property type="match status" value="1"/>
</dbReference>
<dbReference type="Gene3D" id="4.10.860.10">
    <property type="entry name" value="UVR domain"/>
    <property type="match status" value="1"/>
</dbReference>
<dbReference type="Gene3D" id="3.30.420.340">
    <property type="entry name" value="UvrC, RNAse H endonuclease domain"/>
    <property type="match status" value="1"/>
</dbReference>
<dbReference type="HAMAP" id="MF_00203">
    <property type="entry name" value="UvrC"/>
    <property type="match status" value="1"/>
</dbReference>
<dbReference type="InterPro" id="IPR000305">
    <property type="entry name" value="GIY-YIG_endonuc"/>
</dbReference>
<dbReference type="InterPro" id="IPR035901">
    <property type="entry name" value="GIY-YIG_endonuc_sf"/>
</dbReference>
<dbReference type="InterPro" id="IPR047296">
    <property type="entry name" value="GIY-YIG_UvrC_Cho"/>
</dbReference>
<dbReference type="InterPro" id="IPR010994">
    <property type="entry name" value="RuvA_2-like"/>
</dbReference>
<dbReference type="InterPro" id="IPR001943">
    <property type="entry name" value="UVR_dom"/>
</dbReference>
<dbReference type="InterPro" id="IPR036876">
    <property type="entry name" value="UVR_dom_sf"/>
</dbReference>
<dbReference type="InterPro" id="IPR050066">
    <property type="entry name" value="UvrABC_protein_C"/>
</dbReference>
<dbReference type="InterPro" id="IPR004791">
    <property type="entry name" value="UvrC"/>
</dbReference>
<dbReference type="InterPro" id="IPR001162">
    <property type="entry name" value="UvrC_RNase_H_dom"/>
</dbReference>
<dbReference type="InterPro" id="IPR038476">
    <property type="entry name" value="UvrC_RNase_H_dom_sf"/>
</dbReference>
<dbReference type="NCBIfam" id="TIGR00194">
    <property type="entry name" value="uvrC"/>
    <property type="match status" value="1"/>
</dbReference>
<dbReference type="PANTHER" id="PTHR30562:SF1">
    <property type="entry name" value="UVRABC SYSTEM PROTEIN C"/>
    <property type="match status" value="1"/>
</dbReference>
<dbReference type="PANTHER" id="PTHR30562">
    <property type="entry name" value="UVRC/OXIDOREDUCTASE"/>
    <property type="match status" value="1"/>
</dbReference>
<dbReference type="Pfam" id="PF01541">
    <property type="entry name" value="GIY-YIG"/>
    <property type="match status" value="1"/>
</dbReference>
<dbReference type="Pfam" id="PF14520">
    <property type="entry name" value="HHH_5"/>
    <property type="match status" value="1"/>
</dbReference>
<dbReference type="Pfam" id="PF02151">
    <property type="entry name" value="UVR"/>
    <property type="match status" value="1"/>
</dbReference>
<dbReference type="Pfam" id="PF22920">
    <property type="entry name" value="UvrC_RNaseH"/>
    <property type="match status" value="1"/>
</dbReference>
<dbReference type="Pfam" id="PF08459">
    <property type="entry name" value="UvrC_RNaseH_dom"/>
    <property type="match status" value="1"/>
</dbReference>
<dbReference type="SMART" id="SM00465">
    <property type="entry name" value="GIYc"/>
    <property type="match status" value="1"/>
</dbReference>
<dbReference type="SUPFAM" id="SSF46600">
    <property type="entry name" value="C-terminal UvrC-binding domain of UvrB"/>
    <property type="match status" value="1"/>
</dbReference>
<dbReference type="SUPFAM" id="SSF82771">
    <property type="entry name" value="GIY-YIG endonuclease"/>
    <property type="match status" value="1"/>
</dbReference>
<dbReference type="SUPFAM" id="SSF47781">
    <property type="entry name" value="RuvA domain 2-like"/>
    <property type="match status" value="1"/>
</dbReference>
<dbReference type="PROSITE" id="PS50164">
    <property type="entry name" value="GIY_YIG"/>
    <property type="match status" value="1"/>
</dbReference>
<dbReference type="PROSITE" id="PS50151">
    <property type="entry name" value="UVR"/>
    <property type="match status" value="1"/>
</dbReference>
<dbReference type="PROSITE" id="PS50165">
    <property type="entry name" value="UVRC"/>
    <property type="match status" value="1"/>
</dbReference>
<evidence type="ECO:0000255" key="1">
    <source>
        <dbReference type="HAMAP-Rule" id="MF_00203"/>
    </source>
</evidence>
<organism>
    <name type="scientific">Latilactobacillus sakei subsp. sakei (strain 23K)</name>
    <name type="common">Lactobacillus sakei subsp. sakei</name>
    <dbReference type="NCBI Taxonomy" id="314315"/>
    <lineage>
        <taxon>Bacteria</taxon>
        <taxon>Bacillati</taxon>
        <taxon>Bacillota</taxon>
        <taxon>Bacilli</taxon>
        <taxon>Lactobacillales</taxon>
        <taxon>Lactobacillaceae</taxon>
        <taxon>Latilactobacillus</taxon>
    </lineage>
</organism>
<feature type="chain" id="PRO_0000227440" description="UvrABC system protein C">
    <location>
        <begin position="1"/>
        <end position="592"/>
    </location>
</feature>
<feature type="domain" description="GIY-YIG" evidence="1">
    <location>
        <begin position="15"/>
        <end position="92"/>
    </location>
</feature>
<feature type="domain" description="UVR" evidence="1">
    <location>
        <begin position="197"/>
        <end position="232"/>
    </location>
</feature>
<sequence>MASEHIEHKLALLPALPGCYLMKDINAQIIYVGKAKNLKNRVRSYFKSSHEGKTAKLVSEIVDFETIITSTNKEAFLLEITLIQKHQPYFNIKLKRGTGYPYIKITNERDPRLLITGDVKKDGSYYFGPYPDVYAAQETLRFLQRVYPLRRCQGHQGRPCLYYHMGQCLGACFQEVPEAAYTEQIKKIKRFLNGQVDNVKKDLTEKMATAAQEMQFERAAELRDQLRYIEATVEKQKIISNDHTPRDLFAFYMDKGWLSIQIFFIRQARLIRREKRLFPCVNTPEEELATFILQWYNRKNNVLPREILVPDGIEKQVLSDILQVPIRTPQRGEKKALMEMAQKNSRLVLEEKFRLLELDNRKTVGAQDEIMDALGLPHGHVIEAFDHSHIQGTDPVSAMVTFVDGRAEKKLYRKYKLTQTAERAGANEDANTREVIYRRYSRLLKEGKALPDLILMDGGVVELNAAKDVLENELGLTIPVAGMVKDNHHKTASLLFGEADQTIQLDPKSQGFYLLTRIQDEVHRFAISFHRQLRGKNSLSSKLDDIKGVGPKTRTKLLKNFGSMKHIKDASVEELEALGISKTVAQTIKLSL</sequence>
<proteinExistence type="inferred from homology"/>
<reference key="1">
    <citation type="journal article" date="2005" name="Nat. Biotechnol.">
        <title>The complete genome sequence of the meat-borne lactic acid bacterium Lactobacillus sakei 23K.</title>
        <authorList>
            <person name="Chaillou S."/>
            <person name="Champomier-Verges M.-C."/>
            <person name="Cornet M."/>
            <person name="Crutz-Le Coq A.-M."/>
            <person name="Dudez A.-M."/>
            <person name="Martin V."/>
            <person name="Beaufils S."/>
            <person name="Darbon-Rongere E."/>
            <person name="Bossy R."/>
            <person name="Loux V."/>
            <person name="Zagorec M."/>
        </authorList>
    </citation>
    <scope>NUCLEOTIDE SEQUENCE [LARGE SCALE GENOMIC DNA]</scope>
    <source>
        <strain>23K</strain>
    </source>
</reference>
<protein>
    <recommendedName>
        <fullName evidence="1">UvrABC system protein C</fullName>
        <shortName evidence="1">Protein UvrC</shortName>
    </recommendedName>
    <alternativeName>
        <fullName evidence="1">Excinuclease ABC subunit C</fullName>
    </alternativeName>
</protein>
<name>UVRC_LATSS</name>
<keyword id="KW-0963">Cytoplasm</keyword>
<keyword id="KW-0227">DNA damage</keyword>
<keyword id="KW-0228">DNA excision</keyword>
<keyword id="KW-0234">DNA repair</keyword>
<keyword id="KW-0267">Excision nuclease</keyword>
<keyword id="KW-1185">Reference proteome</keyword>
<keyword id="KW-0742">SOS response</keyword>
<gene>
    <name evidence="1" type="primary">uvrC</name>
    <name type="ordered locus">LCA_1055</name>
</gene>